<name>GI_SUHVR</name>
<protein>
    <recommendedName>
        <fullName>Envelope glycoprotein I</fullName>
    </recommendedName>
    <alternativeName>
        <fullName>Glycoprotein GP63</fullName>
    </alternativeName>
</protein>
<sequence length="350" mass="36773">MMMVARDVTRLPAGLLLAALTLAALTPRVGGVLFRGAGVSVHVAGSAVLVPGDAPNLTIDGTLLFLEGPSPSNYSGRVELLRLDPKRACYTREYAAEYDLCPRVHHEAFRGCLRKREPLARRASAAVEARRLLFVSRPAPPDAGSYVLRVRVNGTTDLFVLTALVPPRGRPHHPTPSSADECRPVVGSWHDSLRVVDPAEDAVFTTPPPIEPEPPTTPAPPRGTGATPEPRSDEEEEDEEGATTAMTPVPGTLDANGTMVLNASVVSRVLLAAANATAGARGPGKIAMVLGPTIVVLLIFLGGVACAARRCARGIASTGRDPGAARRSTRRPRGARPPTPSPGRPSPSPR</sequence>
<organism>
    <name type="scientific">Suid herpesvirus 1 (strain Rice)</name>
    <name type="common">SuHV-1</name>
    <name type="synonym">Pseudorabies virus (strain Rice)</name>
    <dbReference type="NCBI Taxonomy" id="10350"/>
    <lineage>
        <taxon>Viruses</taxon>
        <taxon>Duplodnaviria</taxon>
        <taxon>Heunggongvirae</taxon>
        <taxon>Peploviricota</taxon>
        <taxon>Herviviricetes</taxon>
        <taxon>Herpesvirales</taxon>
        <taxon>Orthoherpesviridae</taxon>
        <taxon>Alphaherpesvirinae</taxon>
        <taxon>Varicellovirus</taxon>
        <taxon>Varicellovirus suidalpha1</taxon>
        <taxon>Suid herpesvirus 1</taxon>
    </lineage>
</organism>
<proteinExistence type="inferred from homology"/>
<reference key="1">
    <citation type="journal article" date="1986" name="J. Virol.">
        <title>Use of lambda gt11 to isolate genes for two pseudorabies virus glycoproteins with homology to herpes simplex virus and varicella-zoster virus glycoproteins.</title>
        <authorList>
            <person name="Petrovskis E.A."/>
            <person name="Timmins J.G."/>
            <person name="Post L.E."/>
        </authorList>
    </citation>
    <scope>NUCLEOTIDE SEQUENCE [GENOMIC DNA]</scope>
</reference>
<organismHost>
    <name type="scientific">Sus scrofa</name>
    <name type="common">Pig</name>
    <dbReference type="NCBI Taxonomy" id="9823"/>
</organismHost>
<evidence type="ECO:0000250" key="1"/>
<evidence type="ECO:0000255" key="2"/>
<evidence type="ECO:0000256" key="3">
    <source>
        <dbReference type="SAM" id="MobiDB-lite"/>
    </source>
</evidence>
<evidence type="ECO:0000305" key="4"/>
<feature type="signal peptide" evidence="2">
    <location>
        <begin position="1"/>
        <end position="31"/>
    </location>
</feature>
<feature type="chain" id="PRO_0000038263" description="Envelope glycoprotein I">
    <location>
        <begin position="32"/>
        <end position="350"/>
    </location>
</feature>
<feature type="topological domain" description="Virion surface" evidence="2">
    <location>
        <begin position="32"/>
        <end position="285"/>
    </location>
</feature>
<feature type="transmembrane region" description="Helical" evidence="2">
    <location>
        <begin position="286"/>
        <end position="308"/>
    </location>
</feature>
<feature type="topological domain" description="Intravirion" evidence="2">
    <location>
        <begin position="309"/>
        <end position="350"/>
    </location>
</feature>
<feature type="region of interest" description="Disordered" evidence="3">
    <location>
        <begin position="202"/>
        <end position="253"/>
    </location>
</feature>
<feature type="region of interest" description="Disordered" evidence="3">
    <location>
        <begin position="316"/>
        <end position="350"/>
    </location>
</feature>
<feature type="compositionally biased region" description="Pro residues" evidence="3">
    <location>
        <begin position="206"/>
        <end position="221"/>
    </location>
</feature>
<feature type="compositionally biased region" description="Acidic residues" evidence="3">
    <location>
        <begin position="232"/>
        <end position="241"/>
    </location>
</feature>
<feature type="compositionally biased region" description="Pro residues" evidence="3">
    <location>
        <begin position="335"/>
        <end position="350"/>
    </location>
</feature>
<feature type="glycosylation site" description="N-linked (GlcNAc...) asparagine; by host" evidence="2">
    <location>
        <position position="56"/>
    </location>
</feature>
<feature type="glycosylation site" description="N-linked (GlcNAc...) asparagine; by host" evidence="2">
    <location>
        <position position="73"/>
    </location>
</feature>
<feature type="glycosylation site" description="N-linked (GlcNAc...) asparagine; by host" evidence="2">
    <location>
        <position position="153"/>
    </location>
</feature>
<feature type="glycosylation site" description="N-linked (GlcNAc...) asparagine; by host" evidence="2">
    <location>
        <position position="256"/>
    </location>
</feature>
<feature type="glycosylation site" description="N-linked (GlcNAc...) asparagine; by host" evidence="2">
    <location>
        <position position="262"/>
    </location>
</feature>
<feature type="glycosylation site" description="N-linked (GlcNAc...) asparagine; by host" evidence="2">
    <location>
        <position position="275"/>
    </location>
</feature>
<comment type="function">
    <text>In epithelial cells, the heterodimer gE/gI is required for the cell-to-cell spread of the virus, by sorting nascent virions to cell junctions. Once the virus reaches the cell junctions, virus particles can spread to adjacent cells extremely rapidly through interactions with cellular receptors that accumulate at these junctions. Implicated in basolateral spread in polarized cells. In neuronal cells, gE/gI is essential for the anterograde spread of the infection throughout the host nervous system. Together with US9, the heterodimer gE/gI is involved in the sorting and transport of viral structural components toward axon tips.</text>
</comment>
<comment type="subunit">
    <text evidence="1">Interacts with gE.</text>
</comment>
<comment type="subcellular location">
    <subcellularLocation>
        <location evidence="1">Virion membrane</location>
        <topology evidence="1">Single-pass membrane protein</topology>
    </subcellularLocation>
    <subcellularLocation>
        <location evidence="4">Host cell membrane</location>
        <topology evidence="4">Single-pass type I membrane protein</topology>
    </subcellularLocation>
    <subcellularLocation>
        <location evidence="1">Host cell junction</location>
    </subcellularLocation>
    <subcellularLocation>
        <location evidence="1">Host Golgi apparatus membrane</location>
        <topology evidence="1">Single-pass type I membrane protein</topology>
    </subcellularLocation>
    <text evidence="1">During virion morphogenesis, this protein probably accumulates in the endosomes and trans-Golgi where secondary envelopment occurs. It is probably transported to the cell surface from where it is endocytosed and directed to the trans-Golgi network (TGN). The heterodimer gE/gI then redistribute to cell junctions to promote cell-cell spread later in the infection (By similarity).</text>
</comment>
<comment type="similarity">
    <text evidence="4">Belongs to the alphaherpesvirinae glycoprotein I family.</text>
</comment>
<keyword id="KW-0325">Glycoprotein</keyword>
<keyword id="KW-1031">Host cell junction</keyword>
<keyword id="KW-1032">Host cell membrane</keyword>
<keyword id="KW-1040">Host Golgi apparatus</keyword>
<keyword id="KW-1043">Host membrane</keyword>
<keyword id="KW-0472">Membrane</keyword>
<keyword id="KW-0597">Phosphoprotein</keyword>
<keyword id="KW-0732">Signal</keyword>
<keyword id="KW-0812">Transmembrane</keyword>
<keyword id="KW-1133">Transmembrane helix</keyword>
<keyword id="KW-0261">Viral envelope protein</keyword>
<keyword id="KW-0946">Virion</keyword>
<gene>
    <name type="primary">gI</name>
</gene>
<dbReference type="EMBL" id="M14336">
    <property type="protein sequence ID" value="AAC35204.1"/>
    <property type="molecule type" value="Genomic_DNA"/>
</dbReference>
<dbReference type="PIR" id="A29012">
    <property type="entry name" value="VGBE63"/>
</dbReference>
<dbReference type="GlyCosmos" id="P07646">
    <property type="glycosylation" value="6 sites, No reported glycans"/>
</dbReference>
<dbReference type="GO" id="GO:0043657">
    <property type="term" value="C:host cell"/>
    <property type="evidence" value="ECO:0007669"/>
    <property type="project" value="InterPro"/>
</dbReference>
<dbReference type="GO" id="GO:0044178">
    <property type="term" value="C:host cell Golgi membrane"/>
    <property type="evidence" value="ECO:0007669"/>
    <property type="project" value="UniProtKB-SubCell"/>
</dbReference>
<dbReference type="GO" id="GO:0044156">
    <property type="term" value="C:host cell junction"/>
    <property type="evidence" value="ECO:0007669"/>
    <property type="project" value="UniProtKB-SubCell"/>
</dbReference>
<dbReference type="GO" id="GO:0016020">
    <property type="term" value="C:membrane"/>
    <property type="evidence" value="ECO:0007669"/>
    <property type="project" value="UniProtKB-KW"/>
</dbReference>
<dbReference type="GO" id="GO:0019031">
    <property type="term" value="C:viral envelope"/>
    <property type="evidence" value="ECO:0007669"/>
    <property type="project" value="UniProtKB-KW"/>
</dbReference>
<dbReference type="GO" id="GO:0055036">
    <property type="term" value="C:virion membrane"/>
    <property type="evidence" value="ECO:0007669"/>
    <property type="project" value="UniProtKB-SubCell"/>
</dbReference>
<dbReference type="InterPro" id="IPR002874">
    <property type="entry name" value="Herpes_gI"/>
</dbReference>
<dbReference type="Pfam" id="PF01688">
    <property type="entry name" value="Herpes_gI"/>
    <property type="match status" value="1"/>
</dbReference>
<accession>P07646</accession>